<feature type="chain" id="PRO_0000105058" description="Integration host factor subunit beta">
    <location>
        <begin position="1"/>
        <end position="94"/>
    </location>
</feature>
<name>IHFB_PASMU</name>
<protein>
    <recommendedName>
        <fullName>Integration host factor subunit beta</fullName>
        <shortName>IHF-beta</shortName>
    </recommendedName>
</protein>
<proteinExistence type="inferred from homology"/>
<keyword id="KW-0233">DNA recombination</keyword>
<keyword id="KW-0238">DNA-binding</keyword>
<keyword id="KW-1185">Reference proteome</keyword>
<keyword id="KW-0804">Transcription</keyword>
<keyword id="KW-0805">Transcription regulation</keyword>
<keyword id="KW-0810">Translation regulation</keyword>
<organism>
    <name type="scientific">Pasteurella multocida (strain Pm70)</name>
    <dbReference type="NCBI Taxonomy" id="272843"/>
    <lineage>
        <taxon>Bacteria</taxon>
        <taxon>Pseudomonadati</taxon>
        <taxon>Pseudomonadota</taxon>
        <taxon>Gammaproteobacteria</taxon>
        <taxon>Pasteurellales</taxon>
        <taxon>Pasteurellaceae</taxon>
        <taxon>Pasteurella</taxon>
    </lineage>
</organism>
<reference key="1">
    <citation type="journal article" date="2001" name="Proc. Natl. Acad. Sci. U.S.A.">
        <title>Complete genomic sequence of Pasteurella multocida Pm70.</title>
        <authorList>
            <person name="May B.J."/>
            <person name="Zhang Q."/>
            <person name="Li L.L."/>
            <person name="Paustian M.L."/>
            <person name="Whittam T.S."/>
            <person name="Kapur V."/>
        </authorList>
    </citation>
    <scope>NUCLEOTIDE SEQUENCE [LARGE SCALE GENOMIC DNA]</scope>
    <source>
        <strain>Pm70</strain>
    </source>
</reference>
<dbReference type="EMBL" id="AE004439">
    <property type="protein sequence ID" value="AAK02884.1"/>
    <property type="molecule type" value="Genomic_DNA"/>
</dbReference>
<dbReference type="RefSeq" id="WP_005716620.1">
    <property type="nucleotide sequence ID" value="NC_002663.1"/>
</dbReference>
<dbReference type="SMR" id="Q9CML8"/>
<dbReference type="STRING" id="272843.PM0800"/>
<dbReference type="EnsemblBacteria" id="AAK02884">
    <property type="protein sequence ID" value="AAK02884"/>
    <property type="gene ID" value="PM0800"/>
</dbReference>
<dbReference type="KEGG" id="pmu:PM0800"/>
<dbReference type="HOGENOM" id="CLU_105066_2_0_6"/>
<dbReference type="OrthoDB" id="9804203at2"/>
<dbReference type="Proteomes" id="UP000000809">
    <property type="component" value="Chromosome"/>
</dbReference>
<dbReference type="GO" id="GO:0005694">
    <property type="term" value="C:chromosome"/>
    <property type="evidence" value="ECO:0007669"/>
    <property type="project" value="InterPro"/>
</dbReference>
<dbReference type="GO" id="GO:0005829">
    <property type="term" value="C:cytosol"/>
    <property type="evidence" value="ECO:0007669"/>
    <property type="project" value="TreeGrafter"/>
</dbReference>
<dbReference type="GO" id="GO:0003677">
    <property type="term" value="F:DNA binding"/>
    <property type="evidence" value="ECO:0007669"/>
    <property type="project" value="UniProtKB-UniRule"/>
</dbReference>
<dbReference type="GO" id="GO:0030527">
    <property type="term" value="F:structural constituent of chromatin"/>
    <property type="evidence" value="ECO:0007669"/>
    <property type="project" value="InterPro"/>
</dbReference>
<dbReference type="GO" id="GO:0006310">
    <property type="term" value="P:DNA recombination"/>
    <property type="evidence" value="ECO:0007669"/>
    <property type="project" value="UniProtKB-UniRule"/>
</dbReference>
<dbReference type="GO" id="GO:0006355">
    <property type="term" value="P:regulation of DNA-templated transcription"/>
    <property type="evidence" value="ECO:0007669"/>
    <property type="project" value="UniProtKB-UniRule"/>
</dbReference>
<dbReference type="GO" id="GO:0006417">
    <property type="term" value="P:regulation of translation"/>
    <property type="evidence" value="ECO:0007669"/>
    <property type="project" value="UniProtKB-UniRule"/>
</dbReference>
<dbReference type="CDD" id="cd13836">
    <property type="entry name" value="IHF_B"/>
    <property type="match status" value="1"/>
</dbReference>
<dbReference type="FunFam" id="4.10.520.10:FF:000003">
    <property type="entry name" value="Integration host factor subunit beta"/>
    <property type="match status" value="1"/>
</dbReference>
<dbReference type="Gene3D" id="4.10.520.10">
    <property type="entry name" value="IHF-like DNA-binding proteins"/>
    <property type="match status" value="1"/>
</dbReference>
<dbReference type="HAMAP" id="MF_00381">
    <property type="entry name" value="IHF_beta"/>
    <property type="match status" value="1"/>
</dbReference>
<dbReference type="InterPro" id="IPR000119">
    <property type="entry name" value="Hist_DNA-bd"/>
</dbReference>
<dbReference type="InterPro" id="IPR020816">
    <property type="entry name" value="Histone-like_DNA-bd_CS"/>
</dbReference>
<dbReference type="InterPro" id="IPR010992">
    <property type="entry name" value="IHF-like_DNA-bd_dom_sf"/>
</dbReference>
<dbReference type="InterPro" id="IPR005685">
    <property type="entry name" value="IHF_beta"/>
</dbReference>
<dbReference type="NCBIfam" id="TIGR00988">
    <property type="entry name" value="hip"/>
    <property type="match status" value="1"/>
</dbReference>
<dbReference type="NCBIfam" id="NF001222">
    <property type="entry name" value="PRK00199.1"/>
    <property type="match status" value="1"/>
</dbReference>
<dbReference type="PANTHER" id="PTHR33175">
    <property type="entry name" value="DNA-BINDING PROTEIN HU"/>
    <property type="match status" value="1"/>
</dbReference>
<dbReference type="PANTHER" id="PTHR33175:SF5">
    <property type="entry name" value="INTEGRATION HOST FACTOR SUBUNIT BETA"/>
    <property type="match status" value="1"/>
</dbReference>
<dbReference type="Pfam" id="PF00216">
    <property type="entry name" value="Bac_DNA_binding"/>
    <property type="match status" value="1"/>
</dbReference>
<dbReference type="PRINTS" id="PR01727">
    <property type="entry name" value="DNABINDINGHU"/>
</dbReference>
<dbReference type="SMART" id="SM00411">
    <property type="entry name" value="BHL"/>
    <property type="match status" value="1"/>
</dbReference>
<dbReference type="SUPFAM" id="SSF47729">
    <property type="entry name" value="IHF-like DNA-binding proteins"/>
    <property type="match status" value="1"/>
</dbReference>
<dbReference type="PROSITE" id="PS00045">
    <property type="entry name" value="HISTONE_LIKE"/>
    <property type="match status" value="1"/>
</dbReference>
<accession>Q9CML8</accession>
<comment type="function">
    <text evidence="1">This protein is one of the two subunits of integration host factor, a specific DNA-binding protein that functions in genetic recombination as well as in transcriptional and translational control.</text>
</comment>
<comment type="subunit">
    <text evidence="1">Heterodimer of an alpha and a beta chain.</text>
</comment>
<comment type="similarity">
    <text evidence="2">Belongs to the bacterial histone-like protein family.</text>
</comment>
<evidence type="ECO:0000250" key="1"/>
<evidence type="ECO:0000305" key="2"/>
<gene>
    <name type="primary">ihfB</name>
    <name type="synonym">himD</name>
    <name type="ordered locus">PM0800</name>
</gene>
<sequence>MTKSELIERLVQKCHAVAAKDVENAVKEILDQMSFALESGKRIEVRGFGSFSLHYRQPRLGRNPKTGEQVKLDAKSVPHFKAGKELRERVDIYA</sequence>